<gene>
    <name evidence="1" type="primary">rpsJ</name>
    <name type="ordered locus">HPG27_1269</name>
</gene>
<organism>
    <name type="scientific">Helicobacter pylori (strain G27)</name>
    <dbReference type="NCBI Taxonomy" id="563041"/>
    <lineage>
        <taxon>Bacteria</taxon>
        <taxon>Pseudomonadati</taxon>
        <taxon>Campylobacterota</taxon>
        <taxon>Epsilonproteobacteria</taxon>
        <taxon>Campylobacterales</taxon>
        <taxon>Helicobacteraceae</taxon>
        <taxon>Helicobacter</taxon>
    </lineage>
</organism>
<reference key="1">
    <citation type="journal article" date="2009" name="J. Bacteriol.">
        <title>The complete genome sequence of Helicobacter pylori strain G27.</title>
        <authorList>
            <person name="Baltrus D.A."/>
            <person name="Amieva M.R."/>
            <person name="Covacci A."/>
            <person name="Lowe T.M."/>
            <person name="Merrell D.S."/>
            <person name="Ottemann K.M."/>
            <person name="Stein M."/>
            <person name="Salama N.R."/>
            <person name="Guillemin K."/>
        </authorList>
    </citation>
    <scope>NUCLEOTIDE SEQUENCE [LARGE SCALE GENOMIC DNA]</scope>
    <source>
        <strain>G27</strain>
    </source>
</reference>
<keyword id="KW-1185">Reference proteome</keyword>
<keyword id="KW-0687">Ribonucleoprotein</keyword>
<keyword id="KW-0689">Ribosomal protein</keyword>
<protein>
    <recommendedName>
        <fullName evidence="1">Small ribosomal subunit protein uS10</fullName>
    </recommendedName>
    <alternativeName>
        <fullName evidence="2">30S ribosomal protein S10</fullName>
    </alternativeName>
</protein>
<feature type="chain" id="PRO_1000127135" description="Small ribosomal subunit protein uS10">
    <location>
        <begin position="1"/>
        <end position="104"/>
    </location>
</feature>
<dbReference type="EMBL" id="CP001173">
    <property type="protein sequence ID" value="ACI28017.1"/>
    <property type="molecule type" value="Genomic_DNA"/>
</dbReference>
<dbReference type="RefSeq" id="WP_000411561.1">
    <property type="nucleotide sequence ID" value="NC_011333.1"/>
</dbReference>
<dbReference type="SMR" id="B5Z8W8"/>
<dbReference type="GeneID" id="93237549"/>
<dbReference type="KEGG" id="hpg:HPG27_1269"/>
<dbReference type="HOGENOM" id="CLU_122625_1_3_7"/>
<dbReference type="Proteomes" id="UP000001735">
    <property type="component" value="Chromosome"/>
</dbReference>
<dbReference type="GO" id="GO:1990904">
    <property type="term" value="C:ribonucleoprotein complex"/>
    <property type="evidence" value="ECO:0007669"/>
    <property type="project" value="UniProtKB-KW"/>
</dbReference>
<dbReference type="GO" id="GO:0005840">
    <property type="term" value="C:ribosome"/>
    <property type="evidence" value="ECO:0007669"/>
    <property type="project" value="UniProtKB-KW"/>
</dbReference>
<dbReference type="GO" id="GO:0003735">
    <property type="term" value="F:structural constituent of ribosome"/>
    <property type="evidence" value="ECO:0007669"/>
    <property type="project" value="InterPro"/>
</dbReference>
<dbReference type="GO" id="GO:0000049">
    <property type="term" value="F:tRNA binding"/>
    <property type="evidence" value="ECO:0007669"/>
    <property type="project" value="UniProtKB-UniRule"/>
</dbReference>
<dbReference type="GO" id="GO:0006412">
    <property type="term" value="P:translation"/>
    <property type="evidence" value="ECO:0007669"/>
    <property type="project" value="UniProtKB-UniRule"/>
</dbReference>
<dbReference type="FunFam" id="3.30.70.600:FF:000003">
    <property type="entry name" value="30S ribosomal protein S10"/>
    <property type="match status" value="1"/>
</dbReference>
<dbReference type="Gene3D" id="3.30.70.600">
    <property type="entry name" value="Ribosomal protein S10 domain"/>
    <property type="match status" value="1"/>
</dbReference>
<dbReference type="HAMAP" id="MF_00508">
    <property type="entry name" value="Ribosomal_uS10"/>
    <property type="match status" value="1"/>
</dbReference>
<dbReference type="InterPro" id="IPR001848">
    <property type="entry name" value="Ribosomal_uS10"/>
</dbReference>
<dbReference type="InterPro" id="IPR018268">
    <property type="entry name" value="Ribosomal_uS10_CS"/>
</dbReference>
<dbReference type="InterPro" id="IPR027486">
    <property type="entry name" value="Ribosomal_uS10_dom"/>
</dbReference>
<dbReference type="InterPro" id="IPR036838">
    <property type="entry name" value="Ribosomal_uS10_dom_sf"/>
</dbReference>
<dbReference type="NCBIfam" id="NF001861">
    <property type="entry name" value="PRK00596.1"/>
    <property type="match status" value="1"/>
</dbReference>
<dbReference type="NCBIfam" id="TIGR01049">
    <property type="entry name" value="rpsJ_bact"/>
    <property type="match status" value="1"/>
</dbReference>
<dbReference type="PANTHER" id="PTHR11700">
    <property type="entry name" value="30S RIBOSOMAL PROTEIN S10 FAMILY MEMBER"/>
    <property type="match status" value="1"/>
</dbReference>
<dbReference type="Pfam" id="PF00338">
    <property type="entry name" value="Ribosomal_S10"/>
    <property type="match status" value="1"/>
</dbReference>
<dbReference type="PRINTS" id="PR00971">
    <property type="entry name" value="RIBOSOMALS10"/>
</dbReference>
<dbReference type="SMART" id="SM01403">
    <property type="entry name" value="Ribosomal_S10"/>
    <property type="match status" value="1"/>
</dbReference>
<dbReference type="SUPFAM" id="SSF54999">
    <property type="entry name" value="Ribosomal protein S10"/>
    <property type="match status" value="1"/>
</dbReference>
<dbReference type="PROSITE" id="PS00361">
    <property type="entry name" value="RIBOSOMAL_S10"/>
    <property type="match status" value="1"/>
</dbReference>
<name>RS10_HELPG</name>
<accession>B5Z8W8</accession>
<sequence length="104" mass="11918">MEKIRLKLKAYDHRVLDRSVVAIVEAVKRSGSEIRGPIPLPTKNKRYTVLRSPHVNKDSREQFEIRVYSRLIDIISATPETVDSLMKLDLAPEVDVEVTSMETK</sequence>
<comment type="function">
    <text evidence="1">Involved in the binding of tRNA to the ribosomes.</text>
</comment>
<comment type="subunit">
    <text evidence="1">Part of the 30S ribosomal subunit.</text>
</comment>
<comment type="similarity">
    <text evidence="1">Belongs to the universal ribosomal protein uS10 family.</text>
</comment>
<evidence type="ECO:0000255" key="1">
    <source>
        <dbReference type="HAMAP-Rule" id="MF_00508"/>
    </source>
</evidence>
<evidence type="ECO:0000305" key="2"/>
<proteinExistence type="inferred from homology"/>